<accession>Q66HC3</accession>
<feature type="chain" id="PRO_0000089713" description="Guanine nucleotide exchange factor C9orf72 homolog">
    <location>
        <begin position="1"/>
        <end position="481"/>
    </location>
</feature>
<feature type="domain" description="uDENN C9ORF72-type" evidence="3">
    <location>
        <begin position="23"/>
        <end position="194"/>
    </location>
</feature>
<feature type="domain" description="cDENN C9ORF72-type" evidence="3">
    <location>
        <begin position="200"/>
        <end position="343"/>
    </location>
</feature>
<feature type="domain" description="dDENN C9ORF72-type" evidence="3">
    <location>
        <begin position="370"/>
        <end position="464"/>
    </location>
</feature>
<feature type="region of interest" description="Required for the homodimerization of the C9orf72-SMCR8 complex" evidence="2">
    <location>
        <begin position="461"/>
        <end position="481"/>
    </location>
</feature>
<protein>
    <recommendedName>
        <fullName evidence="4">Guanine nucleotide exchange factor C9orf72 homolog</fullName>
    </recommendedName>
</protein>
<organism>
    <name type="scientific">Rattus norvegicus</name>
    <name type="common">Rat</name>
    <dbReference type="NCBI Taxonomy" id="10116"/>
    <lineage>
        <taxon>Eukaryota</taxon>
        <taxon>Metazoa</taxon>
        <taxon>Chordata</taxon>
        <taxon>Craniata</taxon>
        <taxon>Vertebrata</taxon>
        <taxon>Euteleostomi</taxon>
        <taxon>Mammalia</taxon>
        <taxon>Eutheria</taxon>
        <taxon>Euarchontoglires</taxon>
        <taxon>Glires</taxon>
        <taxon>Rodentia</taxon>
        <taxon>Myomorpha</taxon>
        <taxon>Muroidea</taxon>
        <taxon>Muridae</taxon>
        <taxon>Murinae</taxon>
        <taxon>Rattus</taxon>
    </lineage>
</organism>
<name>CI072_RAT</name>
<proteinExistence type="evidence at transcript level"/>
<dbReference type="EMBL" id="BC081927">
    <property type="protein sequence ID" value="AAH81927.1"/>
    <property type="molecule type" value="mRNA"/>
</dbReference>
<dbReference type="RefSeq" id="NP_001007703.1">
    <property type="nucleotide sequence ID" value="NM_001007702.1"/>
</dbReference>
<dbReference type="SMR" id="Q66HC3"/>
<dbReference type="FunCoup" id="Q66HC3">
    <property type="interactions" value="2957"/>
</dbReference>
<dbReference type="STRING" id="10116.ENSRNOP00000013181"/>
<dbReference type="iPTMnet" id="Q66HC3"/>
<dbReference type="PhosphoSitePlus" id="Q66HC3"/>
<dbReference type="PaxDb" id="10116-ENSRNOP00000013181"/>
<dbReference type="Ensembl" id="ENSRNOT00000013181.7">
    <property type="protein sequence ID" value="ENSRNOP00000013181.5"/>
    <property type="gene ID" value="ENSRNOG00000009478.7"/>
</dbReference>
<dbReference type="GeneID" id="313155"/>
<dbReference type="KEGG" id="rno:313155"/>
<dbReference type="UCSC" id="RGD:1359108">
    <property type="organism name" value="rat"/>
</dbReference>
<dbReference type="AGR" id="RGD:1359108"/>
<dbReference type="CTD" id="313155"/>
<dbReference type="RGD" id="1359108">
    <property type="gene designation" value="RGD1359108"/>
</dbReference>
<dbReference type="eggNOG" id="ENOG502QSST">
    <property type="taxonomic scope" value="Eukaryota"/>
</dbReference>
<dbReference type="InParanoid" id="Q66HC3"/>
<dbReference type="OMA" id="QPFYTSV"/>
<dbReference type="OrthoDB" id="10252077at2759"/>
<dbReference type="PhylomeDB" id="Q66HC3"/>
<dbReference type="TreeFam" id="TF313315"/>
<dbReference type="PRO" id="PR:Q66HC3"/>
<dbReference type="Proteomes" id="UP000002494">
    <property type="component" value="Chromosome 5"/>
</dbReference>
<dbReference type="GO" id="GO:1990316">
    <property type="term" value="C:Atg1/ULK1 kinase complex"/>
    <property type="evidence" value="ECO:0000266"/>
    <property type="project" value="RGD"/>
</dbReference>
<dbReference type="GO" id="GO:0005776">
    <property type="term" value="C:autophagosome"/>
    <property type="evidence" value="ECO:0000250"/>
    <property type="project" value="UniProtKB"/>
</dbReference>
<dbReference type="GO" id="GO:0044295">
    <property type="term" value="C:axonal growth cone"/>
    <property type="evidence" value="ECO:0000250"/>
    <property type="project" value="UniProtKB"/>
</dbReference>
<dbReference type="GO" id="GO:0005737">
    <property type="term" value="C:cytoplasm"/>
    <property type="evidence" value="ECO:0000250"/>
    <property type="project" value="UniProtKB"/>
</dbReference>
<dbReference type="GO" id="GO:0010494">
    <property type="term" value="C:cytoplasmic stress granule"/>
    <property type="evidence" value="ECO:0000250"/>
    <property type="project" value="UniProtKB"/>
</dbReference>
<dbReference type="GO" id="GO:0005829">
    <property type="term" value="C:cytosol"/>
    <property type="evidence" value="ECO:0000250"/>
    <property type="project" value="UniProtKB"/>
</dbReference>
<dbReference type="GO" id="GO:0030425">
    <property type="term" value="C:dendrite"/>
    <property type="evidence" value="ECO:0000250"/>
    <property type="project" value="UniProtKB"/>
</dbReference>
<dbReference type="GO" id="GO:0005768">
    <property type="term" value="C:endosome"/>
    <property type="evidence" value="ECO:0000250"/>
    <property type="project" value="UniProtKB"/>
</dbReference>
<dbReference type="GO" id="GO:0005615">
    <property type="term" value="C:extracellular space"/>
    <property type="evidence" value="ECO:0000250"/>
    <property type="project" value="UniProtKB"/>
</dbReference>
<dbReference type="GO" id="GO:0090543">
    <property type="term" value="C:Flemming body"/>
    <property type="evidence" value="ECO:0007669"/>
    <property type="project" value="Ensembl"/>
</dbReference>
<dbReference type="GO" id="GO:0098978">
    <property type="term" value="C:glutamatergic synapse"/>
    <property type="evidence" value="ECO:0000266"/>
    <property type="project" value="RGD"/>
</dbReference>
<dbReference type="GO" id="GO:0032045">
    <property type="term" value="C:guanyl-nucleotide exchange factor complex"/>
    <property type="evidence" value="ECO:0000266"/>
    <property type="project" value="RGD"/>
</dbReference>
<dbReference type="GO" id="GO:0098686">
    <property type="term" value="C:hippocampal mossy fiber to CA3 synapse"/>
    <property type="evidence" value="ECO:0000266"/>
    <property type="project" value="RGD"/>
</dbReference>
<dbReference type="GO" id="GO:0005764">
    <property type="term" value="C:lysosome"/>
    <property type="evidence" value="ECO:0000250"/>
    <property type="project" value="UniProtKB"/>
</dbReference>
<dbReference type="GO" id="GO:0044304">
    <property type="term" value="C:main axon"/>
    <property type="evidence" value="ECO:0000250"/>
    <property type="project" value="UniProtKB"/>
</dbReference>
<dbReference type="GO" id="GO:0043005">
    <property type="term" value="C:neuron projection"/>
    <property type="evidence" value="ECO:0000250"/>
    <property type="project" value="UniProtKB"/>
</dbReference>
<dbReference type="GO" id="GO:0005634">
    <property type="term" value="C:nucleus"/>
    <property type="evidence" value="ECO:0000250"/>
    <property type="project" value="UniProtKB"/>
</dbReference>
<dbReference type="GO" id="GO:0000932">
    <property type="term" value="C:P-body"/>
    <property type="evidence" value="ECO:0000250"/>
    <property type="project" value="UniProtKB"/>
</dbReference>
<dbReference type="GO" id="GO:0043204">
    <property type="term" value="C:perikaryon"/>
    <property type="evidence" value="ECO:0000250"/>
    <property type="project" value="UniProtKB"/>
</dbReference>
<dbReference type="GO" id="GO:0098794">
    <property type="term" value="C:postsynapse"/>
    <property type="evidence" value="ECO:0000250"/>
    <property type="project" value="UniProtKB"/>
</dbReference>
<dbReference type="GO" id="GO:0098793">
    <property type="term" value="C:presynapse"/>
    <property type="evidence" value="ECO:0000250"/>
    <property type="project" value="UniProtKB"/>
</dbReference>
<dbReference type="GO" id="GO:0099523">
    <property type="term" value="C:presynaptic cytosol"/>
    <property type="evidence" value="ECO:0000266"/>
    <property type="project" value="RGD"/>
</dbReference>
<dbReference type="GO" id="GO:0005096">
    <property type="term" value="F:GTPase activator activity"/>
    <property type="evidence" value="ECO:0000266"/>
    <property type="project" value="RGD"/>
</dbReference>
<dbReference type="GO" id="GO:0005085">
    <property type="term" value="F:guanyl-nucleotide exchange factor activity"/>
    <property type="evidence" value="ECO:0000250"/>
    <property type="project" value="UniProtKB"/>
</dbReference>
<dbReference type="GO" id="GO:0031267">
    <property type="term" value="F:small GTPase binding"/>
    <property type="evidence" value="ECO:0000250"/>
    <property type="project" value="UniProtKB"/>
</dbReference>
<dbReference type="GO" id="GO:0061909">
    <property type="term" value="P:autophagosome-lysosome fusion"/>
    <property type="evidence" value="ECO:0000250"/>
    <property type="project" value="UniProtKB"/>
</dbReference>
<dbReference type="GO" id="GO:0006914">
    <property type="term" value="P:autophagy"/>
    <property type="evidence" value="ECO:0000250"/>
    <property type="project" value="UniProtKB"/>
</dbReference>
<dbReference type="GO" id="GO:0048675">
    <property type="term" value="P:axon extension"/>
    <property type="evidence" value="ECO:0000250"/>
    <property type="project" value="UniProtKB"/>
</dbReference>
<dbReference type="GO" id="GO:0006897">
    <property type="term" value="P:endocytosis"/>
    <property type="evidence" value="ECO:0000250"/>
    <property type="project" value="UniProtKB"/>
</dbReference>
<dbReference type="GO" id="GO:1902774">
    <property type="term" value="P:late endosome to lysosome transport"/>
    <property type="evidence" value="ECO:0000250"/>
    <property type="project" value="UniProtKB"/>
</dbReference>
<dbReference type="GO" id="GO:0016239">
    <property type="term" value="P:positive regulation of macroautophagy"/>
    <property type="evidence" value="ECO:0000250"/>
    <property type="project" value="UniProtKB"/>
</dbReference>
<dbReference type="GO" id="GO:0110053">
    <property type="term" value="P:regulation of actin filament organization"/>
    <property type="evidence" value="ECO:0000250"/>
    <property type="project" value="UniProtKB"/>
</dbReference>
<dbReference type="GO" id="GO:2000785">
    <property type="term" value="P:regulation of autophagosome assembly"/>
    <property type="evidence" value="ECO:0000250"/>
    <property type="project" value="UniProtKB"/>
</dbReference>
<dbReference type="GO" id="GO:0010506">
    <property type="term" value="P:regulation of autophagy"/>
    <property type="evidence" value="ECO:0000250"/>
    <property type="project" value="UniProtKB"/>
</dbReference>
<dbReference type="GO" id="GO:0032880">
    <property type="term" value="P:regulation of protein localization"/>
    <property type="evidence" value="ECO:0000250"/>
    <property type="project" value="UniProtKB"/>
</dbReference>
<dbReference type="GO" id="GO:0098693">
    <property type="term" value="P:regulation of synaptic vesicle cycle"/>
    <property type="evidence" value="ECO:0000266"/>
    <property type="project" value="RGD"/>
</dbReference>
<dbReference type="GO" id="GO:1903432">
    <property type="term" value="P:regulation of TORC1 signaling"/>
    <property type="evidence" value="ECO:0000250"/>
    <property type="project" value="UniProtKB"/>
</dbReference>
<dbReference type="GO" id="GO:0034063">
    <property type="term" value="P:stress granule assembly"/>
    <property type="evidence" value="ECO:0000250"/>
    <property type="project" value="UniProtKB"/>
</dbReference>
<dbReference type="InterPro" id="IPR027819">
    <property type="entry name" value="C9orf72"/>
</dbReference>
<dbReference type="PANTHER" id="PTHR31855">
    <property type="entry name" value="GUANINE NUCLEOTIDE EXCHANGE C9ORF72"/>
    <property type="match status" value="1"/>
</dbReference>
<dbReference type="PANTHER" id="PTHR31855:SF2">
    <property type="entry name" value="GUANINE NUCLEOTIDE EXCHANGE FACTOR C9ORF72"/>
    <property type="match status" value="1"/>
</dbReference>
<dbReference type="Pfam" id="PF15019">
    <property type="entry name" value="C9orf72-like"/>
    <property type="match status" value="1"/>
</dbReference>
<dbReference type="PROSITE" id="PS51835">
    <property type="entry name" value="DENN_C9ORF72"/>
    <property type="match status" value="1"/>
</dbReference>
<keyword id="KW-0072">Autophagy</keyword>
<keyword id="KW-0966">Cell projection</keyword>
<keyword id="KW-0963">Cytoplasm</keyword>
<keyword id="KW-0968">Cytoplasmic vesicle</keyword>
<keyword id="KW-0967">Endosome</keyword>
<keyword id="KW-0344">Guanine-nucleotide releasing factor</keyword>
<keyword id="KW-0458">Lysosome</keyword>
<keyword id="KW-0539">Nucleus</keyword>
<keyword id="KW-1185">Reference proteome</keyword>
<keyword id="KW-0964">Secreted</keyword>
<gene>
    <name evidence="5" type="primary">C9orf72</name>
    <name evidence="1" type="synonym">Dennd9</name>
    <name evidence="2" type="synonym">Dennl72</name>
</gene>
<sequence length="481" mass="54306">MSTICPPPSPAVAKTEIALSGESPLLAATFAYWDNILGPRVRHIWAPKTDQVLLSDGEITFLANHTLNGEILRNAESGAIDVKFFVLSEKGVIIVSLIFDGNWNGDRSTYGLSIILPQTELSFYLPLHRVCVDRLTHIIRKGRIWMHKERQENVQKIVLEGTERMEDQGQSIIPMLTGEVIPVMELLASMRSHSVPEDLDIADTVLNDDDIGDSCHEGFLLNAISSHLQTCGCSVVVGSSAEKVNKIVRTLCLFLTPAERKCSRLCEAESSFKYESGLFVQGLLKDATGSFVLPFRQVMYAPYPTTHIDVDVNTVKQMPPCHEHIYNQRRYMRSELTAFWRATSEEDMAQDTIIYTDESFTPDLNIFQDVLHRDTLVKAFLDQVFHLKPGLSLRSTFLAQFLLILHRKALTLIKYIEDDTQKGKKPFKSLRNLKIDLDLTAEGDLNIIMALAEKIKPGLHSFIFGRPFYTSVQERDVLMTF</sequence>
<reference key="1">
    <citation type="journal article" date="2004" name="Genome Res.">
        <title>The status, quality, and expansion of the NIH full-length cDNA project: the Mammalian Gene Collection (MGC).</title>
        <authorList>
            <consortium name="The MGC Project Team"/>
        </authorList>
    </citation>
    <scope>NUCLEOTIDE SEQUENCE [LARGE SCALE MRNA]</scope>
    <source>
        <tissue>Testis</tissue>
    </source>
</reference>
<comment type="function">
    <text evidence="1 2">Acts as a guanine-nucleotide releasing factor (GEF) for Rab GTPases by promoting the conversion of inactive RAB-GDP to the active form RAB-GTP. Acts as a GEF for RAB39A which enables HOPS-mediated autophagosome-lysosome membrane tethering and fusion in mammalian autophagy. Component of the C9orf72-SMCR8 complex where both subunits display GEF activity and that regulates autophagy. As part of the C9orf72-SMCR8-WDR41 (CSW) complex, functions as GEF for RAB8A and RAB39B, thereby promoting autophagosome maturation. As part of the C9orf72-SMCR8 complex, also functions as GTPase activating protein (GAP) for RAB8A and RAB11A in vitro. The C9orf72-SMCR8 complex also acts as a regulator of autophagy initiation by interacting with the ULK1/ATG1 kinase complex and modulating its protein kinase activity (By similarity). Promotes initiation of autophagy by regulating the RAB1A-dependent trafficking of the ULK1/ATG1 kinase complex to the phagophore which leads to autophagosome formation. Acts as a regulator of mTORC1 signaling by promoting phosphorylation of mTORC1 substrates. Plays a role in endosomal trafficking (By similarity). May be involved in regulating the maturation of phagosomes to lysosomes (By similarity). Promotes the lysosomal localization and lysosome-mediated degradation of CARM1 which leads to inhibition of starvation-induced lipid metabolism (By similarity). Regulates actin dynamics in motor neurons by inhibiting the GTP-binding activity of ARF6, leading to ARF6 inactivation. This reduces the activity of the LIMK1 and LIMK2 kinases which are responsible for phosphorylation and inactivation of cofilin, leading to CFL1/cofilin activation. Positively regulates axon extension and axon growth cone size in spinal motor neurons (By similarity). Required for SMCR8 protein expression and localization at pre- and post-synaptic compartments in the forebrain, also regulates protein abundance of RAB3A and GRIA1/GLUR1 in post-synaptic compartments in the forebrain and hippocampus (By similarity). Plays a role within the hematopoietic system in restricting inflammation and the development of autoimmunity (By similarity).</text>
</comment>
<comment type="subunit">
    <text evidence="1 2">Component of the C9orf72-SMCR8 complex, at least composed of C9orf72, SMCR8 and WDR41 (By similarity). The complex is formed of two protomers, each individually consisting of one molecule each of C9orf72, SMCR8 and WDR41 (By similarity). The protomers homodimerize via an interaction between C9orf72 (via C-terminus) and SMCR8 (via N-terminus) (By similarity). Within each protomer SMCR8 (via DENN domain) acts as a bridging protein between WDR41 (via C-terminus and N-terminus) and C9orf72 (via C-terminus) (By similarity). The C9orf72-SMCR8 complex associates with the ULK1/ATG1 kinase complex. Interacts with ULK1/ATG1 kinase complex members ULK1, ATG13 and RB1CC1. Interacts with SMCR8; the interaction is direct (By similarity). Interacts with HNRNPA1, HNRNPA2B1 and UBQLN2. Interacts with small Rab GTPase RAB1A; the interaction mediates recruitment of RAB1A to the ULK1/ATG1 kinase complex. Also interacts with small Rab GTPase RAB7A. Interacts with cofilin (By similarity). Interacts with GTP-binding proteins ARF1 and ARF6. Interacts with the DLG4/PSD-95 (By similarity). Interacts with CARM1 (via PH domain-like fold) (By similarity). Interacts with RAB39A and RAB39B (in GDP-bound forms); functions as GEF for RAB39A and RAB39B (By similarity).</text>
</comment>
<comment type="subcellular location">
    <subcellularLocation>
        <location evidence="2">Nucleus</location>
    </subcellularLocation>
    <subcellularLocation>
        <location evidence="2">Cytoplasm</location>
    </subcellularLocation>
    <subcellularLocation>
        <location evidence="2">Cytoplasm</location>
        <location evidence="2">P-body</location>
    </subcellularLocation>
    <subcellularLocation>
        <location evidence="2">Cytoplasm</location>
        <location evidence="2">Stress granule</location>
    </subcellularLocation>
    <subcellularLocation>
        <location evidence="2">Endosome</location>
    </subcellularLocation>
    <subcellularLocation>
        <location evidence="2">Lysosome</location>
    </subcellularLocation>
    <subcellularLocation>
        <location evidence="2">Cytoplasmic vesicle</location>
        <location evidence="2">Autophagosome</location>
    </subcellularLocation>
    <subcellularLocation>
        <location evidence="2">Autolysosome</location>
    </subcellularLocation>
    <subcellularLocation>
        <location evidence="2">Secreted</location>
    </subcellularLocation>
    <subcellularLocation>
        <location evidence="2">Cell projection</location>
        <location evidence="2">Axon</location>
    </subcellularLocation>
    <subcellularLocation>
        <location evidence="2">Cell projection</location>
        <location evidence="2">Growth cone</location>
    </subcellularLocation>
    <subcellularLocation>
        <location evidence="1">Perikaryon</location>
    </subcellularLocation>
    <text evidence="1 2">Detected in the cytoplasm of neurons from brain tissue. Detected in the nucleus in fibroblasts. Associates with cytoplasmic stress granules following cellular stress. During corticogenesis, transitions from being predominantly cytoplasmic to a more even nucleocytoplasmic distribution. Majorly localized in cytosol under basal conditions (By similarity). Majorly gathered on autolysosomes structures under autophagy-induced conditions (By similarity).</text>
</comment>
<evidence type="ECO:0000250" key="1">
    <source>
        <dbReference type="UniProtKB" id="Q6DFW0"/>
    </source>
</evidence>
<evidence type="ECO:0000250" key="2">
    <source>
        <dbReference type="UniProtKB" id="Q96LT7"/>
    </source>
</evidence>
<evidence type="ECO:0000255" key="3">
    <source>
        <dbReference type="PROSITE-ProRule" id="PRU01179"/>
    </source>
</evidence>
<evidence type="ECO:0000305" key="4"/>
<evidence type="ECO:0000312" key="5">
    <source>
        <dbReference type="RGD" id="1359108"/>
    </source>
</evidence>